<gene>
    <name type="ordered locus">MT0872</name>
</gene>
<comment type="subcellular location">
    <subcellularLocation>
        <location evidence="2">Cell membrane</location>
        <topology evidence="2">Multi-pass membrane protein</topology>
    </subcellularLocation>
</comment>
<comment type="similarity">
    <text evidence="2">Belongs to the major facilitator superfamily.</text>
</comment>
<comment type="caution">
    <text evidence="2">Could be the product of a pseudogene.</text>
</comment>
<comment type="sequence caution" evidence="2">
    <conflict type="frameshift">
        <sequence resource="EMBL" id="AE000516"/>
    </conflict>
</comment>
<accession>P9WJX4</accession>
<accession>L0T7W9</accession>
<accession>O53861</accession>
<evidence type="ECO:0000255" key="1"/>
<evidence type="ECO:0000305" key="2"/>
<proteinExistence type="uncertain"/>
<name>Y849_MYCTO</name>
<organism>
    <name type="scientific">Mycobacterium tuberculosis (strain CDC 1551 / Oshkosh)</name>
    <dbReference type="NCBI Taxonomy" id="83331"/>
    <lineage>
        <taxon>Bacteria</taxon>
        <taxon>Bacillati</taxon>
        <taxon>Actinomycetota</taxon>
        <taxon>Actinomycetes</taxon>
        <taxon>Mycobacteriales</taxon>
        <taxon>Mycobacteriaceae</taxon>
        <taxon>Mycobacterium</taxon>
        <taxon>Mycobacterium tuberculosis complex</taxon>
    </lineage>
</organism>
<protein>
    <recommendedName>
        <fullName>Putative uncharacterized MFS-type transporter MT0872</fullName>
    </recommendedName>
</protein>
<dbReference type="EMBL" id="AE000516">
    <property type="status" value="NOT_ANNOTATED_CDS"/>
    <property type="molecule type" value="Genomic_DNA"/>
</dbReference>
<dbReference type="PIR" id="A70814">
    <property type="entry name" value="A70814"/>
</dbReference>
<dbReference type="RefSeq" id="WP_003404402.1">
    <property type="nucleotide sequence ID" value="NZ_KK341227.1"/>
</dbReference>
<dbReference type="SMR" id="P9WJX4"/>
<dbReference type="PATRIC" id="fig|83331.31.peg.936"/>
<dbReference type="Proteomes" id="UP000001020">
    <property type="component" value="Chromosome"/>
</dbReference>
<dbReference type="GO" id="GO:0005886">
    <property type="term" value="C:plasma membrane"/>
    <property type="evidence" value="ECO:0007669"/>
    <property type="project" value="UniProtKB-SubCell"/>
</dbReference>
<dbReference type="GO" id="GO:0022857">
    <property type="term" value="F:transmembrane transporter activity"/>
    <property type="evidence" value="ECO:0007669"/>
    <property type="project" value="InterPro"/>
</dbReference>
<dbReference type="CDD" id="cd17329">
    <property type="entry name" value="MFS_MdtH_MDR_like"/>
    <property type="match status" value="1"/>
</dbReference>
<dbReference type="Gene3D" id="1.20.1250.20">
    <property type="entry name" value="MFS general substrate transporter like domains"/>
    <property type="match status" value="1"/>
</dbReference>
<dbReference type="InterPro" id="IPR011701">
    <property type="entry name" value="MFS"/>
</dbReference>
<dbReference type="InterPro" id="IPR020846">
    <property type="entry name" value="MFS_dom"/>
</dbReference>
<dbReference type="InterPro" id="IPR036259">
    <property type="entry name" value="MFS_trans_sf"/>
</dbReference>
<dbReference type="InterPro" id="IPR052425">
    <property type="entry name" value="Uncharacterized_MFS-type"/>
</dbReference>
<dbReference type="PANTHER" id="PTHR42688:SF1">
    <property type="entry name" value="BLR5212 PROTEIN"/>
    <property type="match status" value="1"/>
</dbReference>
<dbReference type="PANTHER" id="PTHR42688">
    <property type="entry name" value="CONSERVED PROTEIN"/>
    <property type="match status" value="1"/>
</dbReference>
<dbReference type="Pfam" id="PF07690">
    <property type="entry name" value="MFS_1"/>
    <property type="match status" value="1"/>
</dbReference>
<dbReference type="SUPFAM" id="SSF103473">
    <property type="entry name" value="MFS general substrate transporter"/>
    <property type="match status" value="1"/>
</dbReference>
<dbReference type="PROSITE" id="PS50850">
    <property type="entry name" value="MFS"/>
    <property type="match status" value="1"/>
</dbReference>
<keyword id="KW-1003">Cell membrane</keyword>
<keyword id="KW-0472">Membrane</keyword>
<keyword id="KW-1185">Reference proteome</keyword>
<keyword id="KW-0812">Transmembrane</keyword>
<keyword id="KW-1133">Transmembrane helix</keyword>
<keyword id="KW-0813">Transport</keyword>
<reference key="1">
    <citation type="journal article" date="2002" name="J. Bacteriol.">
        <title>Whole-genome comparison of Mycobacterium tuberculosis clinical and laboratory strains.</title>
        <authorList>
            <person name="Fleischmann R.D."/>
            <person name="Alland D."/>
            <person name="Eisen J.A."/>
            <person name="Carpenter L."/>
            <person name="White O."/>
            <person name="Peterson J.D."/>
            <person name="DeBoy R.T."/>
            <person name="Dodson R.J."/>
            <person name="Gwinn M.L."/>
            <person name="Haft D.H."/>
            <person name="Hickey E.K."/>
            <person name="Kolonay J.F."/>
            <person name="Nelson W.C."/>
            <person name="Umayam L.A."/>
            <person name="Ermolaeva M.D."/>
            <person name="Salzberg S.L."/>
            <person name="Delcher A."/>
            <person name="Utterback T.R."/>
            <person name="Weidman J.F."/>
            <person name="Khouri H.M."/>
            <person name="Gill J."/>
            <person name="Mikula A."/>
            <person name="Bishai W."/>
            <person name="Jacobs W.R. Jr."/>
            <person name="Venter J.C."/>
            <person name="Fraser C.M."/>
        </authorList>
    </citation>
    <scope>NUCLEOTIDE SEQUENCE [LARGE SCALE GENOMIC DNA]</scope>
    <source>
        <strain>CDC 1551 / Oshkosh</strain>
    </source>
</reference>
<feature type="chain" id="PRO_0000427754" description="Putative uncharacterized MFS-type transporter MT0872">
    <location>
        <begin position="1"/>
        <end position="419"/>
    </location>
</feature>
<feature type="transmembrane region" description="Helical" evidence="1">
    <location>
        <begin position="15"/>
        <end position="35"/>
    </location>
</feature>
<feature type="transmembrane region" description="Helical" evidence="1">
    <location>
        <begin position="36"/>
        <end position="56"/>
    </location>
</feature>
<feature type="transmembrane region" description="Helical" evidence="1">
    <location>
        <begin position="77"/>
        <end position="99"/>
    </location>
</feature>
<feature type="transmembrane region" description="Helical" evidence="1">
    <location>
        <begin position="104"/>
        <end position="126"/>
    </location>
</feature>
<feature type="transmembrane region" description="Helical" evidence="1">
    <location>
        <begin position="140"/>
        <end position="160"/>
    </location>
</feature>
<feature type="transmembrane region" description="Helical" evidence="1">
    <location>
        <begin position="166"/>
        <end position="186"/>
    </location>
</feature>
<feature type="transmembrane region" description="Helical" evidence="1">
    <location>
        <begin position="213"/>
        <end position="233"/>
    </location>
</feature>
<feature type="transmembrane region" description="Helical" evidence="1">
    <location>
        <begin position="246"/>
        <end position="266"/>
    </location>
</feature>
<feature type="transmembrane region" description="Helical" evidence="1">
    <location>
        <begin position="282"/>
        <end position="302"/>
    </location>
</feature>
<feature type="transmembrane region" description="Helical" evidence="1">
    <location>
        <begin position="309"/>
        <end position="329"/>
    </location>
</feature>
<feature type="transmembrane region" description="Helical" evidence="1">
    <location>
        <begin position="351"/>
        <end position="371"/>
    </location>
</feature>
<feature type="transmembrane region" description="Helical" evidence="1">
    <location>
        <begin position="377"/>
        <end position="397"/>
    </location>
</feature>
<sequence length="419" mass="44514">MGARAIFRGFNRPSRVLMINQFGINIGFYMLMPYLADYLAGPLGLAAWAVGLVMGVRNFSQQGMFFVGGTLADRFGYKPLIIAGCLIRTGGFALLVVAQSLPSVLIAAAATGFAGALFNPAVRGYLAAEAGERKIEAFAMFNVFYQSGILLGPLVGLVLLALDFRITVLAAAGVFGLLTVAQLVALPQHRADSEREKTSILQDWRVVVRNRPFLTLAAAMTGCYALSFQIYLALPMQASILMPRNQYLLIAAMFAVSGLVAVGGQLRITRWFAVRWGAERSLVVGATILAASFIPVAVIPNGQRFGVAVAVMALVLSASLLAVASAALFPFEMRAVVALSGDRLVATHYGFYSTIVGVGVLVGNLAIGSLMSAARRLNTDEIVWGGLILVGIVAVAGLRRLDTFTSGSQNMTGRWAAPR</sequence>